<accession>P60601</accession>
<reference key="1">
    <citation type="journal article" date="2004" name="Nat. Biotechnol.">
        <title>Complete genome sequence of the metabolically versatile photosynthetic bacterium Rhodopseudomonas palustris.</title>
        <authorList>
            <person name="Larimer F.W."/>
            <person name="Chain P."/>
            <person name="Hauser L."/>
            <person name="Lamerdin J.E."/>
            <person name="Malfatti S."/>
            <person name="Do L."/>
            <person name="Land M.L."/>
            <person name="Pelletier D.A."/>
            <person name="Beatty J.T."/>
            <person name="Lang A.S."/>
            <person name="Tabita F.R."/>
            <person name="Gibson J.L."/>
            <person name="Hanson T.E."/>
            <person name="Bobst C."/>
            <person name="Torres y Torres J.L."/>
            <person name="Peres C."/>
            <person name="Harrison F.H."/>
            <person name="Gibson J."/>
            <person name="Harwood C.S."/>
        </authorList>
    </citation>
    <scope>NUCLEOTIDE SEQUENCE [LARGE SCALE GENOMIC DNA]</scope>
    <source>
        <strain>ATCC BAA-98 / CGA009</strain>
    </source>
</reference>
<feature type="chain" id="PRO_0000152416" description="Imidazole glycerol phosphate synthase subunit HisH">
    <location>
        <begin position="1"/>
        <end position="216"/>
    </location>
</feature>
<feature type="domain" description="Glutamine amidotransferase type-1" evidence="1">
    <location>
        <begin position="2"/>
        <end position="216"/>
    </location>
</feature>
<feature type="active site" description="Nucleophile" evidence="1">
    <location>
        <position position="88"/>
    </location>
</feature>
<feature type="active site" evidence="1">
    <location>
        <position position="196"/>
    </location>
</feature>
<feature type="active site" evidence="1">
    <location>
        <position position="198"/>
    </location>
</feature>
<dbReference type="EC" id="4.3.2.10" evidence="1"/>
<dbReference type="EC" id="3.5.1.2" evidence="1"/>
<dbReference type="EMBL" id="BX572593">
    <property type="protein sequence ID" value="CAE25755.1"/>
    <property type="molecule type" value="Genomic_DNA"/>
</dbReference>
<dbReference type="RefSeq" id="WP_011155879.1">
    <property type="nucleotide sequence ID" value="NZ_CP116810.1"/>
</dbReference>
<dbReference type="SMR" id="P60601"/>
<dbReference type="IntAct" id="P60601">
    <property type="interactions" value="1"/>
</dbReference>
<dbReference type="MINT" id="P60601"/>
<dbReference type="STRING" id="258594.RPA0311"/>
<dbReference type="GeneID" id="66891321"/>
<dbReference type="eggNOG" id="COG0118">
    <property type="taxonomic scope" value="Bacteria"/>
</dbReference>
<dbReference type="HOGENOM" id="CLU_071837_2_0_5"/>
<dbReference type="PhylomeDB" id="P60601"/>
<dbReference type="UniPathway" id="UPA00031">
    <property type="reaction ID" value="UER00010"/>
</dbReference>
<dbReference type="GO" id="GO:0005737">
    <property type="term" value="C:cytoplasm"/>
    <property type="evidence" value="ECO:0007669"/>
    <property type="project" value="UniProtKB-SubCell"/>
</dbReference>
<dbReference type="GO" id="GO:0004359">
    <property type="term" value="F:glutaminase activity"/>
    <property type="evidence" value="ECO:0007669"/>
    <property type="project" value="UniProtKB-EC"/>
</dbReference>
<dbReference type="GO" id="GO:0000107">
    <property type="term" value="F:imidazoleglycerol-phosphate synthase activity"/>
    <property type="evidence" value="ECO:0007669"/>
    <property type="project" value="UniProtKB-UniRule"/>
</dbReference>
<dbReference type="GO" id="GO:0016829">
    <property type="term" value="F:lyase activity"/>
    <property type="evidence" value="ECO:0007669"/>
    <property type="project" value="UniProtKB-KW"/>
</dbReference>
<dbReference type="GO" id="GO:0000105">
    <property type="term" value="P:L-histidine biosynthetic process"/>
    <property type="evidence" value="ECO:0007669"/>
    <property type="project" value="UniProtKB-UniRule"/>
</dbReference>
<dbReference type="CDD" id="cd01748">
    <property type="entry name" value="GATase1_IGP_Synthase"/>
    <property type="match status" value="1"/>
</dbReference>
<dbReference type="Gene3D" id="3.40.50.880">
    <property type="match status" value="1"/>
</dbReference>
<dbReference type="HAMAP" id="MF_00278">
    <property type="entry name" value="HisH"/>
    <property type="match status" value="1"/>
</dbReference>
<dbReference type="InterPro" id="IPR029062">
    <property type="entry name" value="Class_I_gatase-like"/>
</dbReference>
<dbReference type="InterPro" id="IPR017926">
    <property type="entry name" value="GATASE"/>
</dbReference>
<dbReference type="InterPro" id="IPR010139">
    <property type="entry name" value="Imidazole-glycPsynth_HisH"/>
</dbReference>
<dbReference type="NCBIfam" id="TIGR01855">
    <property type="entry name" value="IMP_synth_hisH"/>
    <property type="match status" value="1"/>
</dbReference>
<dbReference type="PANTHER" id="PTHR42701">
    <property type="entry name" value="IMIDAZOLE GLYCEROL PHOSPHATE SYNTHASE SUBUNIT HISH"/>
    <property type="match status" value="1"/>
</dbReference>
<dbReference type="PANTHER" id="PTHR42701:SF1">
    <property type="entry name" value="IMIDAZOLE GLYCEROL PHOSPHATE SYNTHASE SUBUNIT HISH"/>
    <property type="match status" value="1"/>
</dbReference>
<dbReference type="Pfam" id="PF00117">
    <property type="entry name" value="GATase"/>
    <property type="match status" value="1"/>
</dbReference>
<dbReference type="PIRSF" id="PIRSF000495">
    <property type="entry name" value="Amidotransf_hisH"/>
    <property type="match status" value="1"/>
</dbReference>
<dbReference type="SUPFAM" id="SSF52317">
    <property type="entry name" value="Class I glutamine amidotransferase-like"/>
    <property type="match status" value="1"/>
</dbReference>
<dbReference type="PROSITE" id="PS51273">
    <property type="entry name" value="GATASE_TYPE_1"/>
    <property type="match status" value="1"/>
</dbReference>
<name>HIS5_RHOPA</name>
<gene>
    <name evidence="1" type="primary">hisH</name>
    <name type="ordered locus">RPA0311</name>
</gene>
<protein>
    <recommendedName>
        <fullName evidence="1">Imidazole glycerol phosphate synthase subunit HisH</fullName>
        <ecNumber evidence="1">4.3.2.10</ecNumber>
    </recommendedName>
    <alternativeName>
        <fullName evidence="1">IGP synthase glutaminase subunit</fullName>
        <ecNumber evidence="1">3.5.1.2</ecNumber>
    </alternativeName>
    <alternativeName>
        <fullName evidence="1">IGP synthase subunit HisH</fullName>
    </alternativeName>
    <alternativeName>
        <fullName evidence="1">ImGP synthase subunit HisH</fullName>
        <shortName evidence="1">IGPS subunit HisH</shortName>
    </alternativeName>
</protein>
<proteinExistence type="inferred from homology"/>
<evidence type="ECO:0000255" key="1">
    <source>
        <dbReference type="HAMAP-Rule" id="MF_00278"/>
    </source>
</evidence>
<sequence length="216" mass="23630">MSVAIVDYGSGNLHSAAKAFERAARSMENPEPILVTRDPDQVFRADRVVLPGVGAFADCRKGLDSIDGMVQALNETVRDKARPFFGICVGMQLMATRGKEHVTTDGLNWIAGDVVKIAPDREDLKIPHMGWNTLDPVREHPVLEKLPLGPKGLHAYFVHSFHLAAEHEGDVLARADYGGPVTAVVGKDTAIGTQFHPEKSQRFGLALISNFLKWKP</sequence>
<comment type="function">
    <text evidence="1">IGPS catalyzes the conversion of PRFAR and glutamine to IGP, AICAR and glutamate. The HisH subunit catalyzes the hydrolysis of glutamine to glutamate and ammonia as part of the synthesis of IGP and AICAR. The resulting ammonia molecule is channeled to the active site of HisF.</text>
</comment>
<comment type="catalytic activity">
    <reaction evidence="1">
        <text>5-[(5-phospho-1-deoxy-D-ribulos-1-ylimino)methylamino]-1-(5-phospho-beta-D-ribosyl)imidazole-4-carboxamide + L-glutamine = D-erythro-1-(imidazol-4-yl)glycerol 3-phosphate + 5-amino-1-(5-phospho-beta-D-ribosyl)imidazole-4-carboxamide + L-glutamate + H(+)</text>
        <dbReference type="Rhea" id="RHEA:24793"/>
        <dbReference type="ChEBI" id="CHEBI:15378"/>
        <dbReference type="ChEBI" id="CHEBI:29985"/>
        <dbReference type="ChEBI" id="CHEBI:58278"/>
        <dbReference type="ChEBI" id="CHEBI:58359"/>
        <dbReference type="ChEBI" id="CHEBI:58475"/>
        <dbReference type="ChEBI" id="CHEBI:58525"/>
        <dbReference type="EC" id="4.3.2.10"/>
    </reaction>
</comment>
<comment type="catalytic activity">
    <reaction evidence="1">
        <text>L-glutamine + H2O = L-glutamate + NH4(+)</text>
        <dbReference type="Rhea" id="RHEA:15889"/>
        <dbReference type="ChEBI" id="CHEBI:15377"/>
        <dbReference type="ChEBI" id="CHEBI:28938"/>
        <dbReference type="ChEBI" id="CHEBI:29985"/>
        <dbReference type="ChEBI" id="CHEBI:58359"/>
        <dbReference type="EC" id="3.5.1.2"/>
    </reaction>
</comment>
<comment type="pathway">
    <text evidence="1">Amino-acid biosynthesis; L-histidine biosynthesis; L-histidine from 5-phospho-alpha-D-ribose 1-diphosphate: step 5/9.</text>
</comment>
<comment type="subunit">
    <text evidence="1">Heterodimer of HisH and HisF.</text>
</comment>
<comment type="subcellular location">
    <subcellularLocation>
        <location evidence="1">Cytoplasm</location>
    </subcellularLocation>
</comment>
<keyword id="KW-0028">Amino-acid biosynthesis</keyword>
<keyword id="KW-0963">Cytoplasm</keyword>
<keyword id="KW-0315">Glutamine amidotransferase</keyword>
<keyword id="KW-0368">Histidine biosynthesis</keyword>
<keyword id="KW-0378">Hydrolase</keyword>
<keyword id="KW-0456">Lyase</keyword>
<organism>
    <name type="scientific">Rhodopseudomonas palustris (strain ATCC BAA-98 / CGA009)</name>
    <dbReference type="NCBI Taxonomy" id="258594"/>
    <lineage>
        <taxon>Bacteria</taxon>
        <taxon>Pseudomonadati</taxon>
        <taxon>Pseudomonadota</taxon>
        <taxon>Alphaproteobacteria</taxon>
        <taxon>Hyphomicrobiales</taxon>
        <taxon>Nitrobacteraceae</taxon>
        <taxon>Rhodopseudomonas</taxon>
    </lineage>
</organism>